<organism>
    <name type="scientific">Escherichia coli (strain K12)</name>
    <dbReference type="NCBI Taxonomy" id="83333"/>
    <lineage>
        <taxon>Bacteria</taxon>
        <taxon>Pseudomonadati</taxon>
        <taxon>Pseudomonadota</taxon>
        <taxon>Gammaproteobacteria</taxon>
        <taxon>Enterobacterales</taxon>
        <taxon>Enterobacteriaceae</taxon>
        <taxon>Escherichia</taxon>
    </lineage>
</organism>
<dbReference type="EMBL" id="AP009048">
    <property type="protein sequence ID" value="BAA16125.1"/>
    <property type="molecule type" value="Genomic_DNA"/>
</dbReference>
<dbReference type="KEGG" id="ecj:JW2285"/>
<dbReference type="KEGG" id="ecoc:C3026_17555"/>
<dbReference type="KEGG" id="ecoc:C3026_18660"/>
<dbReference type="PATRIC" id="fig|83333.103.peg.1325"/>
<dbReference type="HOGENOM" id="CLU_076276_2_0_6"/>
<dbReference type="OMA" id="VEICRAD"/>
<dbReference type="PhylomeDB" id="P0CF30"/>
<dbReference type="PRO" id="PR:P0CF30"/>
<dbReference type="GO" id="GO:0003677">
    <property type="term" value="F:DNA binding"/>
    <property type="evidence" value="ECO:0007669"/>
    <property type="project" value="InterPro"/>
</dbReference>
<dbReference type="GO" id="GO:0004803">
    <property type="term" value="F:transposase activity"/>
    <property type="evidence" value="ECO:0007669"/>
    <property type="project" value="InterPro"/>
</dbReference>
<dbReference type="GO" id="GO:0006313">
    <property type="term" value="P:DNA transposition"/>
    <property type="evidence" value="ECO:0007669"/>
    <property type="project" value="InterPro"/>
</dbReference>
<dbReference type="InterPro" id="IPR005063">
    <property type="entry name" value="Transposase_27"/>
</dbReference>
<dbReference type="InterPro" id="IPR051354">
    <property type="entry name" value="Transposase_27_IS1"/>
</dbReference>
<dbReference type="NCBIfam" id="NF033558">
    <property type="entry name" value="transpos_IS1"/>
    <property type="match status" value="1"/>
</dbReference>
<dbReference type="PANTHER" id="PTHR33293">
    <property type="entry name" value="INSERTION ELEMENT IS1 1 PROTEIN INSB-RELATED"/>
    <property type="match status" value="1"/>
</dbReference>
<dbReference type="PANTHER" id="PTHR33293:SF1">
    <property type="entry name" value="INSERTION ELEMENT IS1 1 PROTEIN INSB-RELATED"/>
    <property type="match status" value="1"/>
</dbReference>
<dbReference type="Pfam" id="PF03400">
    <property type="entry name" value="DDE_Tnp_IS1"/>
    <property type="match status" value="1"/>
</dbReference>
<feature type="chain" id="PRO_0000393405" description="Insertion element IS1 8 protein InsB">
    <location>
        <begin position="1"/>
        <end position="167"/>
    </location>
</feature>
<gene>
    <name type="ordered locus">JW2285</name>
</gene>
<keyword id="KW-0233">DNA recombination</keyword>
<keyword id="KW-0814">Transposable element</keyword>
<keyword id="KW-0815">Transposition</keyword>
<sequence length="167" mass="19565">MPGNSPHYGRWPQHDFTSLKKLRPQSVTSRIQPGSDVIVCAEMDEQWGYVGAKSRQRWLFYAYDSLRKTVVAHVFGERTMATLGRLMSLLSPFDVVIWMTDGWPLYESRLKGKLHVISKRYTQRIERHNLNLRQHLARLGRKSLSFSKSVELHDKVIGHYLNIKHYQ</sequence>
<accession>P0CF30</accession>
<accession>P03830</accession>
<accession>P77707</accession>
<accession>Q2MCH3</accession>
<proteinExistence type="inferred from homology"/>
<reference key="1">
    <citation type="journal article" date="1997" name="DNA Res.">
        <title>Construction of a contiguous 874-kb sequence of the Escherichia coli-K12 genome corresponding to 50.0-68.8 min on the linkage map and analysis of its sequence features.</title>
        <authorList>
            <person name="Yamamoto Y."/>
            <person name="Aiba H."/>
            <person name="Baba T."/>
            <person name="Hayashi K."/>
            <person name="Inada T."/>
            <person name="Isono K."/>
            <person name="Itoh T."/>
            <person name="Kimura S."/>
            <person name="Kitagawa M."/>
            <person name="Makino K."/>
            <person name="Miki T."/>
            <person name="Mitsuhashi N."/>
            <person name="Mizobuchi K."/>
            <person name="Mori H."/>
            <person name="Nakade S."/>
            <person name="Nakamura Y."/>
            <person name="Nashimoto H."/>
            <person name="Oshima T."/>
            <person name="Oyama S."/>
            <person name="Saito N."/>
            <person name="Sampei G."/>
            <person name="Satoh Y."/>
            <person name="Sivasundaram S."/>
            <person name="Tagami H."/>
            <person name="Takahashi H."/>
            <person name="Takeda J."/>
            <person name="Takemoto K."/>
            <person name="Uehara K."/>
            <person name="Wada C."/>
            <person name="Yamagata S."/>
            <person name="Horiuchi T."/>
        </authorList>
    </citation>
    <scope>NUCLEOTIDE SEQUENCE [LARGE SCALE GENOMIC DNA]</scope>
    <source>
        <strain>K12 / W3110 / ATCC 27325 / DSM 5911</strain>
    </source>
</reference>
<reference key="2">
    <citation type="journal article" date="2006" name="Mol. Syst. Biol.">
        <title>Highly accurate genome sequences of Escherichia coli K-12 strains MG1655 and W3110.</title>
        <authorList>
            <person name="Hayashi K."/>
            <person name="Morooka N."/>
            <person name="Yamamoto Y."/>
            <person name="Fujita K."/>
            <person name="Isono K."/>
            <person name="Choi S."/>
            <person name="Ohtsubo E."/>
            <person name="Baba T."/>
            <person name="Wanner B.L."/>
            <person name="Mori H."/>
            <person name="Horiuchi T."/>
        </authorList>
    </citation>
    <scope>NUCLEOTIDE SEQUENCE [LARGE SCALE GENOMIC DNA]</scope>
    <source>
        <strain>K12 / W3110 / ATCC 27325 / DSM 5911</strain>
    </source>
</reference>
<evidence type="ECO:0000305" key="1"/>
<protein>
    <recommendedName>
        <fullName>Insertion element IS1 8 protein InsB</fullName>
    </recommendedName>
</protein>
<name>INSB8_ECOLI</name>
<comment type="function">
    <text>Absolutely required for transposition of IS1.</text>
</comment>
<comment type="similarity">
    <text evidence="1">Belongs to the transposase 27 family.</text>
</comment>
<comment type="caution">
    <text evidence="1">There is no equivalent of this gene in strain K12 / MG1655.</text>
</comment>